<organism>
    <name type="scientific">Rotavirus A (strain RVA/Human/Japan/AU-1/1982/G3P3[9])</name>
    <name type="common">RV-A</name>
    <dbReference type="NCBI Taxonomy" id="39013"/>
    <lineage>
        <taxon>Viruses</taxon>
        <taxon>Riboviria</taxon>
        <taxon>Orthornavirae</taxon>
        <taxon>Duplornaviricota</taxon>
        <taxon>Resentoviricetes</taxon>
        <taxon>Reovirales</taxon>
        <taxon>Sedoreoviridae</taxon>
        <taxon>Rotavirus</taxon>
        <taxon>Rotavirus A</taxon>
    </lineage>
</organism>
<feature type="chain" id="PRO_0000369535" description="Non-structural protein 2">
    <location>
        <begin position="1"/>
        <end position="317"/>
    </location>
</feature>
<feature type="region of interest" description="RNA-binding" evidence="1">
    <location>
        <begin position="205"/>
        <end position="241"/>
    </location>
</feature>
<feature type="active site" description="For NTPase and RTPase activities" evidence="1">
    <location>
        <position position="225"/>
    </location>
</feature>
<feature type="binding site" evidence="1">
    <location>
        <begin position="107"/>
        <end position="109"/>
    </location>
    <ligand>
        <name>ATP</name>
        <dbReference type="ChEBI" id="CHEBI:30616"/>
    </ligand>
</feature>
<feature type="binding site" evidence="1">
    <location>
        <position position="188"/>
    </location>
    <ligand>
        <name>ATP</name>
        <dbReference type="ChEBI" id="CHEBI:30616"/>
    </ligand>
</feature>
<feature type="binding site" evidence="1">
    <location>
        <begin position="221"/>
        <end position="223"/>
    </location>
    <ligand>
        <name>ATP</name>
        <dbReference type="ChEBI" id="CHEBI:30616"/>
    </ligand>
</feature>
<feature type="binding site" evidence="1">
    <location>
        <position position="227"/>
    </location>
    <ligand>
        <name>ATP</name>
        <dbReference type="ChEBI" id="CHEBI:30616"/>
    </ligand>
</feature>
<keyword id="KW-0067">ATP-binding</keyword>
<keyword id="KW-1035">Host cytoplasm</keyword>
<keyword id="KW-0378">Hydrolase</keyword>
<keyword id="KW-0460">Magnesium</keyword>
<keyword id="KW-0479">Metal-binding</keyword>
<keyword id="KW-0547">Nucleotide-binding</keyword>
<keyword id="KW-0694">RNA-binding</keyword>
<comment type="function">
    <text evidence="1">Participates in replication and packaging of the viral genome. Plays a crucial role, together with NSP5, in the formation of virus factories (viroplasms), which are large inclusions in the host cytoplasm where replication intermediates are assembled and viral RNA replication takes place. Displays ssRNA binding, NTPase, RNA triphosphatase (RTPase) and ATP-independent helix-unwinding activities. The unwinding activity may prepare and organize plus-strand RNAs for packaging and replication by removing interfering secondary structures. The RTPase activity plays a role in the removal of the gamma-phosphate from the rotavirus RNA minus strands of dsRNA genome segments. Participates in the selective exclusion of host proteins from stress granules (SG) and P bodies (PB). Also participates in the sequestration of these remodeled organelles in viral factories.</text>
</comment>
<comment type="cofactor">
    <cofactor evidence="1">
        <name>Mg(2+)</name>
        <dbReference type="ChEBI" id="CHEBI:18420"/>
    </cofactor>
</comment>
<comment type="subunit">
    <text evidence="1">Homooctamer. Interacts with VP1; this interaction is weak. Interacts with NSP5; this interaction leads to up-regulation of NSP5 phosphorylation and formation of viral factories. Interacts with host DCP1A, DCP1B, DDX6, EDC4 and EIF2S1/eIF2-alpha; these interactions are probably part of the sequestration of some host SGs and PBs proteins in viral factories.</text>
</comment>
<comment type="subcellular location">
    <subcellularLocation>
        <location evidence="1">Host cytoplasm</location>
    </subcellularLocation>
    <text evidence="1">Found in spherical cytoplasmic structures, called viral factories, that appear early after infection and are the site of viral replication and packaging.</text>
</comment>
<comment type="similarity">
    <text evidence="1">Belongs to the rotavirus NSP2 family.</text>
</comment>
<evidence type="ECO:0000255" key="1">
    <source>
        <dbReference type="HAMAP-Rule" id="MF_04089"/>
    </source>
</evidence>
<dbReference type="EC" id="3.6.4.-" evidence="1"/>
<dbReference type="EMBL" id="DQ490534">
    <property type="protein sequence ID" value="ABF67541.1"/>
    <property type="molecule type" value="Genomic_RNA"/>
</dbReference>
<dbReference type="SMR" id="A4ZCW3"/>
<dbReference type="Proteomes" id="UP000001454">
    <property type="component" value="Genome"/>
</dbReference>
<dbReference type="GO" id="GO:0030430">
    <property type="term" value="C:host cell cytoplasm"/>
    <property type="evidence" value="ECO:0007669"/>
    <property type="project" value="UniProtKB-SubCell"/>
</dbReference>
<dbReference type="GO" id="GO:0005524">
    <property type="term" value="F:ATP binding"/>
    <property type="evidence" value="ECO:0007669"/>
    <property type="project" value="UniProtKB-KW"/>
</dbReference>
<dbReference type="GO" id="GO:0046872">
    <property type="term" value="F:metal ion binding"/>
    <property type="evidence" value="ECO:0007669"/>
    <property type="project" value="UniProtKB-UniRule"/>
</dbReference>
<dbReference type="GO" id="GO:0004550">
    <property type="term" value="F:nucleoside diphosphate kinase activity"/>
    <property type="evidence" value="ECO:0007669"/>
    <property type="project" value="InterPro"/>
</dbReference>
<dbReference type="GO" id="GO:0017111">
    <property type="term" value="F:ribonucleoside triphosphate phosphatase activity"/>
    <property type="evidence" value="ECO:0007669"/>
    <property type="project" value="InterPro"/>
</dbReference>
<dbReference type="GO" id="GO:0003723">
    <property type="term" value="F:RNA binding"/>
    <property type="evidence" value="ECO:0007669"/>
    <property type="project" value="UniProtKB-UniRule"/>
</dbReference>
<dbReference type="GO" id="GO:0019079">
    <property type="term" value="P:viral genome replication"/>
    <property type="evidence" value="ECO:0007669"/>
    <property type="project" value="UniProtKB-UniRule"/>
</dbReference>
<dbReference type="Gene3D" id="3.30.428.20">
    <property type="entry name" value="Rotavirus NSP2 fragment, C-terminal domain"/>
    <property type="match status" value="1"/>
</dbReference>
<dbReference type="Gene3D" id="3.90.1400.10">
    <property type="entry name" value="Rotavirus NSP2 fragment, N-terminal domain"/>
    <property type="match status" value="1"/>
</dbReference>
<dbReference type="HAMAP" id="MF_04089">
    <property type="entry name" value="ROTA_NSP2"/>
    <property type="match status" value="1"/>
</dbReference>
<dbReference type="InterPro" id="IPR048306">
    <property type="entry name" value="Rota_NS35_C"/>
</dbReference>
<dbReference type="InterPro" id="IPR048573">
    <property type="entry name" value="Rota_NS35_N"/>
</dbReference>
<dbReference type="InterPro" id="IPR003668">
    <property type="entry name" value="Rotavirus_NSP2"/>
</dbReference>
<dbReference type="InterPro" id="IPR024076">
    <property type="entry name" value="Rotavirus_NSP2_C"/>
</dbReference>
<dbReference type="InterPro" id="IPR024068">
    <property type="entry name" value="Rotavirus_NSP2_N"/>
</dbReference>
<dbReference type="Pfam" id="PF02509">
    <property type="entry name" value="Rota_NS35_C"/>
    <property type="match status" value="1"/>
</dbReference>
<dbReference type="Pfam" id="PF21067">
    <property type="entry name" value="Rota_NS35_N"/>
    <property type="match status" value="1"/>
</dbReference>
<dbReference type="SUPFAM" id="SSF75347">
    <property type="entry name" value="Rotavirus NSP2 fragment, C-terminal domain"/>
    <property type="match status" value="1"/>
</dbReference>
<dbReference type="SUPFAM" id="SSF75574">
    <property type="entry name" value="Rotavirus NSP2 fragment, N-terminal domain"/>
    <property type="match status" value="1"/>
</dbReference>
<organismHost>
    <name type="scientific">Homo sapiens</name>
    <name type="common">Human</name>
    <dbReference type="NCBI Taxonomy" id="9606"/>
</organismHost>
<proteinExistence type="inferred from homology"/>
<sequence>MAELACFCYPHLENDSYKFIPFNSLAIKCMLTAKVDKKDLDKFYNSIIYGIAPPPQFKKRYNTNDNSRGMNFETQMFTKVATLICEALNSLKITQIDVASVLSRVVSVRHLENLVLRKENHQDILFHSKDLLIKSVLIAIGQSKEIETTATAEGGKIVFQNAAFTMWKLTYLDHQLMPILDQNFIEYKVTLNEDKPISDGHVKELVAELRWQYNKFAVITHGKGHYRVVKYSSVANHADRVYATFKNNIKSGIASDFTLLDQRIIWQNWYAFTSSMKQGNTLEVCRKLLFQKMKQEPNPFRGLSTDRKMDEVSQVGI</sequence>
<reference key="1">
    <citation type="journal article" date="2007" name="J. Virol.">
        <title>Evolutionary history and global spread of the emerging G12 human rotaviruses.</title>
        <authorList>
            <person name="Rahman M."/>
            <person name="Matthijnssens J."/>
            <person name="Yang X."/>
            <person name="Delbeke T."/>
            <person name="Arijs I."/>
            <person name="Taniguchi K."/>
            <person name="Iturriza-Gomara M."/>
            <person name="Iftekharuddin N."/>
            <person name="Azim T."/>
            <person name="Van Ranst M."/>
        </authorList>
    </citation>
    <scope>NUCLEOTIDE SEQUENCE [GENOMIC RNA]</scope>
</reference>
<name>NSP2_ROTH3</name>
<accession>A4ZCW3</accession>
<protein>
    <recommendedName>
        <fullName evidence="1">Non-structural protein 2</fullName>
        <shortName evidence="1">NSP2</shortName>
        <ecNumber evidence="1">3.6.4.-</ecNumber>
    </recommendedName>
    <alternativeName>
        <fullName evidence="1">NCVP3</fullName>
    </alternativeName>
    <alternativeName>
        <fullName evidence="1">Non-structural RNA-binding protein 35</fullName>
        <shortName evidence="1">NS35</shortName>
    </alternativeName>
</protein>